<keyword id="KW-0963">Cytoplasm</keyword>
<keyword id="KW-0378">Hydrolase</keyword>
<keyword id="KW-0694">RNA-binding</keyword>
<keyword id="KW-0820">tRNA-binding</keyword>
<comment type="function">
    <text evidence="1">Hydrolyzes ribosome-free peptidyl-tRNAs (with 1 or more amino acids incorporated), which drop off the ribosome during protein synthesis, or as a result of ribosome stalling.</text>
</comment>
<comment type="function">
    <text evidence="1">Catalyzes the release of premature peptidyl moieties from peptidyl-tRNA molecules trapped in stalled 50S ribosomal subunits, and thus maintains levels of free tRNAs and 50S ribosomes.</text>
</comment>
<comment type="catalytic activity">
    <reaction evidence="1">
        <text>an N-acyl-L-alpha-aminoacyl-tRNA + H2O = an N-acyl-L-amino acid + a tRNA + H(+)</text>
        <dbReference type="Rhea" id="RHEA:54448"/>
        <dbReference type="Rhea" id="RHEA-COMP:10123"/>
        <dbReference type="Rhea" id="RHEA-COMP:13883"/>
        <dbReference type="ChEBI" id="CHEBI:15377"/>
        <dbReference type="ChEBI" id="CHEBI:15378"/>
        <dbReference type="ChEBI" id="CHEBI:59874"/>
        <dbReference type="ChEBI" id="CHEBI:78442"/>
        <dbReference type="ChEBI" id="CHEBI:138191"/>
        <dbReference type="EC" id="3.1.1.29"/>
    </reaction>
</comment>
<comment type="subunit">
    <text evidence="1">Monomer.</text>
</comment>
<comment type="subcellular location">
    <subcellularLocation>
        <location evidence="1">Cytoplasm</location>
    </subcellularLocation>
</comment>
<comment type="similarity">
    <text evidence="1">Belongs to the PTH family.</text>
</comment>
<dbReference type="EC" id="3.1.1.29" evidence="1"/>
<dbReference type="EMBL" id="AL596164">
    <property type="protein sequence ID" value="CAC95478.1"/>
    <property type="molecule type" value="Genomic_DNA"/>
</dbReference>
<dbReference type="PIR" id="AF1463">
    <property type="entry name" value="AF1463"/>
</dbReference>
<dbReference type="RefSeq" id="WP_003760026.1">
    <property type="nucleotide sequence ID" value="NC_003212.1"/>
</dbReference>
<dbReference type="SMR" id="Q92F62"/>
<dbReference type="STRING" id="272626.gene:17564557"/>
<dbReference type="GeneID" id="93233680"/>
<dbReference type="KEGG" id="lin:pth"/>
<dbReference type="eggNOG" id="COG0193">
    <property type="taxonomic scope" value="Bacteria"/>
</dbReference>
<dbReference type="HOGENOM" id="CLU_062456_4_1_9"/>
<dbReference type="OrthoDB" id="9800507at2"/>
<dbReference type="Proteomes" id="UP000002513">
    <property type="component" value="Chromosome"/>
</dbReference>
<dbReference type="GO" id="GO:0005737">
    <property type="term" value="C:cytoplasm"/>
    <property type="evidence" value="ECO:0007669"/>
    <property type="project" value="UniProtKB-SubCell"/>
</dbReference>
<dbReference type="GO" id="GO:0004045">
    <property type="term" value="F:peptidyl-tRNA hydrolase activity"/>
    <property type="evidence" value="ECO:0007669"/>
    <property type="project" value="UniProtKB-UniRule"/>
</dbReference>
<dbReference type="GO" id="GO:0000049">
    <property type="term" value="F:tRNA binding"/>
    <property type="evidence" value="ECO:0007669"/>
    <property type="project" value="UniProtKB-UniRule"/>
</dbReference>
<dbReference type="GO" id="GO:0006515">
    <property type="term" value="P:protein quality control for misfolded or incompletely synthesized proteins"/>
    <property type="evidence" value="ECO:0007669"/>
    <property type="project" value="UniProtKB-UniRule"/>
</dbReference>
<dbReference type="GO" id="GO:0072344">
    <property type="term" value="P:rescue of stalled ribosome"/>
    <property type="evidence" value="ECO:0007669"/>
    <property type="project" value="UniProtKB-UniRule"/>
</dbReference>
<dbReference type="CDD" id="cd00462">
    <property type="entry name" value="PTH"/>
    <property type="match status" value="1"/>
</dbReference>
<dbReference type="FunFam" id="3.40.50.1470:FF:000001">
    <property type="entry name" value="Peptidyl-tRNA hydrolase"/>
    <property type="match status" value="1"/>
</dbReference>
<dbReference type="Gene3D" id="3.40.50.1470">
    <property type="entry name" value="Peptidyl-tRNA hydrolase"/>
    <property type="match status" value="1"/>
</dbReference>
<dbReference type="HAMAP" id="MF_00083">
    <property type="entry name" value="Pept_tRNA_hydro_bact"/>
    <property type="match status" value="1"/>
</dbReference>
<dbReference type="InterPro" id="IPR001328">
    <property type="entry name" value="Pept_tRNA_hydro"/>
</dbReference>
<dbReference type="InterPro" id="IPR018171">
    <property type="entry name" value="Pept_tRNA_hydro_CS"/>
</dbReference>
<dbReference type="InterPro" id="IPR036416">
    <property type="entry name" value="Pept_tRNA_hydro_sf"/>
</dbReference>
<dbReference type="NCBIfam" id="TIGR00447">
    <property type="entry name" value="pth"/>
    <property type="match status" value="1"/>
</dbReference>
<dbReference type="PANTHER" id="PTHR17224">
    <property type="entry name" value="PEPTIDYL-TRNA HYDROLASE"/>
    <property type="match status" value="1"/>
</dbReference>
<dbReference type="PANTHER" id="PTHR17224:SF1">
    <property type="entry name" value="PEPTIDYL-TRNA HYDROLASE"/>
    <property type="match status" value="1"/>
</dbReference>
<dbReference type="Pfam" id="PF01195">
    <property type="entry name" value="Pept_tRNA_hydro"/>
    <property type="match status" value="1"/>
</dbReference>
<dbReference type="SUPFAM" id="SSF53178">
    <property type="entry name" value="Peptidyl-tRNA hydrolase-like"/>
    <property type="match status" value="1"/>
</dbReference>
<dbReference type="PROSITE" id="PS01195">
    <property type="entry name" value="PEPT_TRNA_HYDROL_1"/>
    <property type="match status" value="1"/>
</dbReference>
<dbReference type="PROSITE" id="PS01196">
    <property type="entry name" value="PEPT_TRNA_HYDROL_2"/>
    <property type="match status" value="1"/>
</dbReference>
<protein>
    <recommendedName>
        <fullName evidence="1">Peptidyl-tRNA hydrolase</fullName>
        <shortName evidence="1">Pth</shortName>
        <ecNumber evidence="1">3.1.1.29</ecNumber>
    </recommendedName>
</protein>
<gene>
    <name evidence="1" type="primary">pth</name>
    <name type="ordered locus">lin0245</name>
</gene>
<proteinExistence type="inferred from homology"/>
<accession>Q92F62</accession>
<sequence>MKLIAGLGNPGKKYERTRHNVGFMVVDELSFRHQTPWKKSKFNGMVSEINVGGEKMILVKPLTFMNASGECIRPLMDYYNIQIEDVLIVYDDLDLPVGKIRLRQKGSAGGHNGMKSIIQHVKTQEFNRIRVGVSRPLKGEVIHYVLGDFPKAEQPDIIAAIQKSADAIEDFAQTPFIEVMNKYN</sequence>
<reference key="1">
    <citation type="journal article" date="2001" name="Science">
        <title>Comparative genomics of Listeria species.</title>
        <authorList>
            <person name="Glaser P."/>
            <person name="Frangeul L."/>
            <person name="Buchrieser C."/>
            <person name="Rusniok C."/>
            <person name="Amend A."/>
            <person name="Baquero F."/>
            <person name="Berche P."/>
            <person name="Bloecker H."/>
            <person name="Brandt P."/>
            <person name="Chakraborty T."/>
            <person name="Charbit A."/>
            <person name="Chetouani F."/>
            <person name="Couve E."/>
            <person name="de Daruvar A."/>
            <person name="Dehoux P."/>
            <person name="Domann E."/>
            <person name="Dominguez-Bernal G."/>
            <person name="Duchaud E."/>
            <person name="Durant L."/>
            <person name="Dussurget O."/>
            <person name="Entian K.-D."/>
            <person name="Fsihi H."/>
            <person name="Garcia-del Portillo F."/>
            <person name="Garrido P."/>
            <person name="Gautier L."/>
            <person name="Goebel W."/>
            <person name="Gomez-Lopez N."/>
            <person name="Hain T."/>
            <person name="Hauf J."/>
            <person name="Jackson D."/>
            <person name="Jones L.-M."/>
            <person name="Kaerst U."/>
            <person name="Kreft J."/>
            <person name="Kuhn M."/>
            <person name="Kunst F."/>
            <person name="Kurapkat G."/>
            <person name="Madueno E."/>
            <person name="Maitournam A."/>
            <person name="Mata Vicente J."/>
            <person name="Ng E."/>
            <person name="Nedjari H."/>
            <person name="Nordsiek G."/>
            <person name="Novella S."/>
            <person name="de Pablos B."/>
            <person name="Perez-Diaz J.-C."/>
            <person name="Purcell R."/>
            <person name="Remmel B."/>
            <person name="Rose M."/>
            <person name="Schlueter T."/>
            <person name="Simoes N."/>
            <person name="Tierrez A."/>
            <person name="Vazquez-Boland J.-A."/>
            <person name="Voss H."/>
            <person name="Wehland J."/>
            <person name="Cossart P."/>
        </authorList>
    </citation>
    <scope>NUCLEOTIDE SEQUENCE [LARGE SCALE GENOMIC DNA]</scope>
    <source>
        <strain>ATCC BAA-680 / CLIP 11262</strain>
    </source>
</reference>
<feature type="chain" id="PRO_0000187763" description="Peptidyl-tRNA hydrolase">
    <location>
        <begin position="1"/>
        <end position="184"/>
    </location>
</feature>
<feature type="active site" description="Proton acceptor" evidence="1">
    <location>
        <position position="19"/>
    </location>
</feature>
<feature type="binding site" evidence="1">
    <location>
        <position position="14"/>
    </location>
    <ligand>
        <name>tRNA</name>
        <dbReference type="ChEBI" id="CHEBI:17843"/>
    </ligand>
</feature>
<feature type="binding site" evidence="1">
    <location>
        <position position="64"/>
    </location>
    <ligand>
        <name>tRNA</name>
        <dbReference type="ChEBI" id="CHEBI:17843"/>
    </ligand>
</feature>
<feature type="binding site" evidence="1">
    <location>
        <position position="66"/>
    </location>
    <ligand>
        <name>tRNA</name>
        <dbReference type="ChEBI" id="CHEBI:17843"/>
    </ligand>
</feature>
<feature type="binding site" evidence="1">
    <location>
        <position position="112"/>
    </location>
    <ligand>
        <name>tRNA</name>
        <dbReference type="ChEBI" id="CHEBI:17843"/>
    </ligand>
</feature>
<feature type="site" description="Discriminates between blocked and unblocked aminoacyl-tRNA" evidence="1">
    <location>
        <position position="9"/>
    </location>
</feature>
<feature type="site" description="Stabilizes the basic form of H active site to accept a proton" evidence="1">
    <location>
        <position position="91"/>
    </location>
</feature>
<evidence type="ECO:0000255" key="1">
    <source>
        <dbReference type="HAMAP-Rule" id="MF_00083"/>
    </source>
</evidence>
<organism>
    <name type="scientific">Listeria innocua serovar 6a (strain ATCC BAA-680 / CLIP 11262)</name>
    <dbReference type="NCBI Taxonomy" id="272626"/>
    <lineage>
        <taxon>Bacteria</taxon>
        <taxon>Bacillati</taxon>
        <taxon>Bacillota</taxon>
        <taxon>Bacilli</taxon>
        <taxon>Bacillales</taxon>
        <taxon>Listeriaceae</taxon>
        <taxon>Listeria</taxon>
    </lineage>
</organism>
<name>PTH_LISIN</name>